<feature type="chain" id="PRO_0000355357" description="D-tagatose-1,6-bisphosphate aldolase subunit GatY">
    <location>
        <begin position="1"/>
        <end position="284"/>
    </location>
</feature>
<feature type="active site" description="Proton donor" evidence="1">
    <location>
        <position position="82"/>
    </location>
</feature>
<feature type="binding site" evidence="1">
    <location>
        <position position="83"/>
    </location>
    <ligand>
        <name>Zn(2+)</name>
        <dbReference type="ChEBI" id="CHEBI:29105"/>
        <note>catalytic</note>
    </ligand>
</feature>
<feature type="binding site" evidence="1">
    <location>
        <position position="180"/>
    </location>
    <ligand>
        <name>Zn(2+)</name>
        <dbReference type="ChEBI" id="CHEBI:29105"/>
        <note>catalytic</note>
    </ligand>
</feature>
<feature type="binding site" evidence="1">
    <location>
        <position position="181"/>
    </location>
    <ligand>
        <name>dihydroxyacetone phosphate</name>
        <dbReference type="ChEBI" id="CHEBI:57642"/>
    </ligand>
</feature>
<feature type="binding site" evidence="1">
    <location>
        <position position="208"/>
    </location>
    <ligand>
        <name>Zn(2+)</name>
        <dbReference type="ChEBI" id="CHEBI:29105"/>
        <note>catalytic</note>
    </ligand>
</feature>
<feature type="binding site" evidence="1">
    <location>
        <begin position="209"/>
        <end position="211"/>
    </location>
    <ligand>
        <name>dihydroxyacetone phosphate</name>
        <dbReference type="ChEBI" id="CHEBI:57642"/>
    </ligand>
</feature>
<feature type="binding site" evidence="1">
    <location>
        <begin position="230"/>
        <end position="233"/>
    </location>
    <ligand>
        <name>dihydroxyacetone phosphate</name>
        <dbReference type="ChEBI" id="CHEBI:57642"/>
    </ligand>
</feature>
<reference key="1">
    <citation type="journal article" date="2005" name="Nucleic Acids Res.">
        <title>Genome dynamics and diversity of Shigella species, the etiologic agents of bacillary dysentery.</title>
        <authorList>
            <person name="Yang F."/>
            <person name="Yang J."/>
            <person name="Zhang X."/>
            <person name="Chen L."/>
            <person name="Jiang Y."/>
            <person name="Yan Y."/>
            <person name="Tang X."/>
            <person name="Wang J."/>
            <person name="Xiong Z."/>
            <person name="Dong J."/>
            <person name="Xue Y."/>
            <person name="Zhu Y."/>
            <person name="Xu X."/>
            <person name="Sun L."/>
            <person name="Chen S."/>
            <person name="Nie H."/>
            <person name="Peng J."/>
            <person name="Xu J."/>
            <person name="Wang Y."/>
            <person name="Yuan Z."/>
            <person name="Wen Y."/>
            <person name="Yao Z."/>
            <person name="Shen Y."/>
            <person name="Qiang B."/>
            <person name="Hou Y."/>
            <person name="Yu J."/>
            <person name="Jin Q."/>
        </authorList>
    </citation>
    <scope>NUCLEOTIDE SEQUENCE [LARGE SCALE GENOMIC DNA]</scope>
    <source>
        <strain>Ss046</strain>
    </source>
</reference>
<dbReference type="EC" id="4.1.2.40" evidence="1"/>
<dbReference type="EMBL" id="CP000038">
    <property type="protein sequence ID" value="AAZ88798.1"/>
    <property type="status" value="ALT_INIT"/>
    <property type="molecule type" value="Genomic_DNA"/>
</dbReference>
<dbReference type="RefSeq" id="WP_000289795.1">
    <property type="nucleotide sequence ID" value="NC_007384.1"/>
</dbReference>
<dbReference type="SMR" id="Q3Z0B4"/>
<dbReference type="GeneID" id="93775098"/>
<dbReference type="KEGG" id="ssn:SSON_2144"/>
<dbReference type="HOGENOM" id="CLU_040088_0_1_6"/>
<dbReference type="UniPathway" id="UPA00704">
    <property type="reaction ID" value="UER00716"/>
</dbReference>
<dbReference type="Proteomes" id="UP000002529">
    <property type="component" value="Chromosome"/>
</dbReference>
<dbReference type="GO" id="GO:0005829">
    <property type="term" value="C:cytosol"/>
    <property type="evidence" value="ECO:0007669"/>
    <property type="project" value="TreeGrafter"/>
</dbReference>
<dbReference type="GO" id="GO:0009025">
    <property type="term" value="F:tagatose-bisphosphate aldolase activity"/>
    <property type="evidence" value="ECO:0007669"/>
    <property type="project" value="UniProtKB-UniRule"/>
</dbReference>
<dbReference type="GO" id="GO:0008270">
    <property type="term" value="F:zinc ion binding"/>
    <property type="evidence" value="ECO:0007669"/>
    <property type="project" value="UniProtKB-UniRule"/>
</dbReference>
<dbReference type="GO" id="GO:2001059">
    <property type="term" value="P:D-tagatose 6-phosphate catabolic process"/>
    <property type="evidence" value="ECO:0007669"/>
    <property type="project" value="UniProtKB-UniRule"/>
</dbReference>
<dbReference type="GO" id="GO:0019404">
    <property type="term" value="P:galactitol catabolic process"/>
    <property type="evidence" value="ECO:0007669"/>
    <property type="project" value="InterPro"/>
</dbReference>
<dbReference type="CDD" id="cd00947">
    <property type="entry name" value="TBP_aldolase_IIB"/>
    <property type="match status" value="1"/>
</dbReference>
<dbReference type="FunFam" id="3.20.20.70:FF:000043">
    <property type="entry name" value="D-tagatose-1,6-bisphosphate aldolase subunit GatY"/>
    <property type="match status" value="1"/>
</dbReference>
<dbReference type="Gene3D" id="3.20.20.70">
    <property type="entry name" value="Aldolase class I"/>
    <property type="match status" value="1"/>
</dbReference>
<dbReference type="HAMAP" id="MF_01294">
    <property type="entry name" value="TagBP_aldolase_GatY"/>
    <property type="match status" value="1"/>
</dbReference>
<dbReference type="InterPro" id="IPR013785">
    <property type="entry name" value="Aldolase_TIM"/>
</dbReference>
<dbReference type="InterPro" id="IPR050246">
    <property type="entry name" value="Class_II_FBP_aldolase"/>
</dbReference>
<dbReference type="InterPro" id="IPR000771">
    <property type="entry name" value="FBA_II"/>
</dbReference>
<dbReference type="InterPro" id="IPR011288">
    <property type="entry name" value="TagBP_ald_KbaY/GatY"/>
</dbReference>
<dbReference type="InterPro" id="IPR023955">
    <property type="entry name" value="TagBP_aldolase_GatY"/>
</dbReference>
<dbReference type="NCBIfam" id="TIGR00167">
    <property type="entry name" value="cbbA"/>
    <property type="match status" value="1"/>
</dbReference>
<dbReference type="NCBIfam" id="NF006626">
    <property type="entry name" value="PRK09195.1"/>
    <property type="match status" value="1"/>
</dbReference>
<dbReference type="NCBIfam" id="NF009374">
    <property type="entry name" value="PRK12737.1"/>
    <property type="match status" value="1"/>
</dbReference>
<dbReference type="NCBIfam" id="TIGR01858">
    <property type="entry name" value="tag_bisphos_ald"/>
    <property type="match status" value="1"/>
</dbReference>
<dbReference type="PANTHER" id="PTHR30304">
    <property type="entry name" value="D-TAGATOSE-1,6-BISPHOSPHATE ALDOLASE"/>
    <property type="match status" value="1"/>
</dbReference>
<dbReference type="PANTHER" id="PTHR30304:SF0">
    <property type="entry name" value="D-TAGATOSE-1,6-BISPHOSPHATE ALDOLASE SUBUNIT GATY-RELATED"/>
    <property type="match status" value="1"/>
</dbReference>
<dbReference type="Pfam" id="PF01116">
    <property type="entry name" value="F_bP_aldolase"/>
    <property type="match status" value="1"/>
</dbReference>
<dbReference type="PIRSF" id="PIRSF001359">
    <property type="entry name" value="F_bP_aldolase_II"/>
    <property type="match status" value="1"/>
</dbReference>
<dbReference type="SUPFAM" id="SSF51569">
    <property type="entry name" value="Aldolase"/>
    <property type="match status" value="1"/>
</dbReference>
<dbReference type="PROSITE" id="PS00602">
    <property type="entry name" value="ALDOLASE_CLASS_II_1"/>
    <property type="match status" value="1"/>
</dbReference>
<dbReference type="PROSITE" id="PS00806">
    <property type="entry name" value="ALDOLASE_CLASS_II_2"/>
    <property type="match status" value="1"/>
</dbReference>
<gene>
    <name evidence="1" type="primary">gatY</name>
    <name type="ordered locus">SSON_2144</name>
</gene>
<organism>
    <name type="scientific">Shigella sonnei (strain Ss046)</name>
    <dbReference type="NCBI Taxonomy" id="300269"/>
    <lineage>
        <taxon>Bacteria</taxon>
        <taxon>Pseudomonadati</taxon>
        <taxon>Pseudomonadota</taxon>
        <taxon>Gammaproteobacteria</taxon>
        <taxon>Enterobacterales</taxon>
        <taxon>Enterobacteriaceae</taxon>
        <taxon>Shigella</taxon>
    </lineage>
</organism>
<name>GATY_SHISS</name>
<protein>
    <recommendedName>
        <fullName evidence="1">D-tagatose-1,6-bisphosphate aldolase subunit GatY</fullName>
        <shortName evidence="1">TBPA</shortName>
        <shortName evidence="1">TagBP aldolase</shortName>
        <ecNumber evidence="1">4.1.2.40</ecNumber>
    </recommendedName>
    <alternativeName>
        <fullName evidence="1">D-tagatose-bisphosphate aldolase class II</fullName>
    </alternativeName>
    <alternativeName>
        <fullName evidence="1">Tagatose-bisphosphate aldolase</fullName>
    </alternativeName>
</protein>
<comment type="function">
    <text evidence="1">Catalytic subunit of the tagatose-1,6-bisphosphate aldolase GatYZ, which catalyzes the reversible aldol condensation of dihydroxyacetone phosphate (DHAP or glycerone-phosphate) with glyceraldehyde 3-phosphate (G3P) to produce tagatose 1,6-bisphosphate (TBP). Requires GatZ subunit for full activity and stability. Is involved in the catabolism of galactitol.</text>
</comment>
<comment type="catalytic activity">
    <reaction evidence="1">
        <text>D-tagatofuranose 1,6-bisphosphate = D-glyceraldehyde 3-phosphate + dihydroxyacetone phosphate</text>
        <dbReference type="Rhea" id="RHEA:22948"/>
        <dbReference type="ChEBI" id="CHEBI:57642"/>
        <dbReference type="ChEBI" id="CHEBI:58694"/>
        <dbReference type="ChEBI" id="CHEBI:59776"/>
        <dbReference type="EC" id="4.1.2.40"/>
    </reaction>
</comment>
<comment type="cofactor">
    <cofactor evidence="1">
        <name>Zn(2+)</name>
        <dbReference type="ChEBI" id="CHEBI:29105"/>
    </cofactor>
    <text evidence="1">Binds 1 zinc ion per subunit.</text>
</comment>
<comment type="pathway">
    <text evidence="1">Carbohydrate metabolism; D-tagatose 6-phosphate degradation; D-glyceraldehyde 3-phosphate and glycerone phosphate from D-tagatose 6-phosphate: step 2/2.</text>
</comment>
<comment type="subunit">
    <text evidence="1">Forms a complex with GatZ.</text>
</comment>
<comment type="similarity">
    <text evidence="1">Belongs to the class II fructose-bisphosphate aldolase family. TagBP aldolase GatY subfamily.</text>
</comment>
<comment type="sequence caution" evidence="2">
    <conflict type="erroneous initiation">
        <sequence resource="EMBL-CDS" id="AAZ88798"/>
    </conflict>
</comment>
<accession>Q3Z0B4</accession>
<keyword id="KW-0298">Galactitol metabolism</keyword>
<keyword id="KW-0456">Lyase</keyword>
<keyword id="KW-0479">Metal-binding</keyword>
<keyword id="KW-1185">Reference proteome</keyword>
<keyword id="KW-0862">Zinc</keyword>
<sequence length="284" mass="30900">MYVVSTKQMLNNAQRGGYAVPAFNIHNLETMQVVVETAANLHAPVIIAGTPGTFTYAGTENLLALVSAMAKQYHHPLAIHLDHHTKFDDIAQKVRSGVRSVMIDASHLPFAQNISRVKEVVDFCHRFDVSVEAELGQLGGQEDDVQVNEADVFYTNPAQAREFAEATGIDSLAVAIGTAHGMYASAPALDFSRLENIRQWVNLPLVLHGASGLSTKDIQQTIKLGICKINVATELKNAFSQALKNYLTEHPEATDPRDYLQSAKSAMRDVVSKVIADCGCEGRA</sequence>
<proteinExistence type="inferred from homology"/>
<evidence type="ECO:0000255" key="1">
    <source>
        <dbReference type="HAMAP-Rule" id="MF_01294"/>
    </source>
</evidence>
<evidence type="ECO:0000305" key="2"/>